<name>PYRG_STAA1</name>
<dbReference type="EC" id="6.3.4.2" evidence="1"/>
<dbReference type="EMBL" id="AP009324">
    <property type="protein sequence ID" value="BAF78994.1"/>
    <property type="molecule type" value="Genomic_DNA"/>
</dbReference>
<dbReference type="RefSeq" id="WP_000159960.1">
    <property type="nucleotide sequence ID" value="NZ_CTYB01000015.1"/>
</dbReference>
<dbReference type="SMR" id="A7X4X7"/>
<dbReference type="MEROPS" id="C26.964"/>
<dbReference type="KEGG" id="saw:SAHV_2111"/>
<dbReference type="HOGENOM" id="CLU_011675_5_0_9"/>
<dbReference type="UniPathway" id="UPA00159">
    <property type="reaction ID" value="UER00277"/>
</dbReference>
<dbReference type="GO" id="GO:0005829">
    <property type="term" value="C:cytosol"/>
    <property type="evidence" value="ECO:0007669"/>
    <property type="project" value="TreeGrafter"/>
</dbReference>
<dbReference type="GO" id="GO:0005524">
    <property type="term" value="F:ATP binding"/>
    <property type="evidence" value="ECO:0007669"/>
    <property type="project" value="UniProtKB-KW"/>
</dbReference>
<dbReference type="GO" id="GO:0003883">
    <property type="term" value="F:CTP synthase activity"/>
    <property type="evidence" value="ECO:0007669"/>
    <property type="project" value="UniProtKB-UniRule"/>
</dbReference>
<dbReference type="GO" id="GO:0004359">
    <property type="term" value="F:glutaminase activity"/>
    <property type="evidence" value="ECO:0007669"/>
    <property type="project" value="RHEA"/>
</dbReference>
<dbReference type="GO" id="GO:0042802">
    <property type="term" value="F:identical protein binding"/>
    <property type="evidence" value="ECO:0007669"/>
    <property type="project" value="TreeGrafter"/>
</dbReference>
<dbReference type="GO" id="GO:0046872">
    <property type="term" value="F:metal ion binding"/>
    <property type="evidence" value="ECO:0007669"/>
    <property type="project" value="UniProtKB-KW"/>
</dbReference>
<dbReference type="GO" id="GO:0044210">
    <property type="term" value="P:'de novo' CTP biosynthetic process"/>
    <property type="evidence" value="ECO:0007669"/>
    <property type="project" value="UniProtKB-UniRule"/>
</dbReference>
<dbReference type="GO" id="GO:0019856">
    <property type="term" value="P:pyrimidine nucleobase biosynthetic process"/>
    <property type="evidence" value="ECO:0007669"/>
    <property type="project" value="TreeGrafter"/>
</dbReference>
<dbReference type="CDD" id="cd03113">
    <property type="entry name" value="CTPS_N"/>
    <property type="match status" value="1"/>
</dbReference>
<dbReference type="CDD" id="cd01746">
    <property type="entry name" value="GATase1_CTP_Synthase"/>
    <property type="match status" value="1"/>
</dbReference>
<dbReference type="FunFam" id="3.40.50.300:FF:000009">
    <property type="entry name" value="CTP synthase"/>
    <property type="match status" value="1"/>
</dbReference>
<dbReference type="FunFam" id="3.40.50.880:FF:000002">
    <property type="entry name" value="CTP synthase"/>
    <property type="match status" value="1"/>
</dbReference>
<dbReference type="Gene3D" id="3.40.50.880">
    <property type="match status" value="1"/>
</dbReference>
<dbReference type="Gene3D" id="3.40.50.300">
    <property type="entry name" value="P-loop containing nucleotide triphosphate hydrolases"/>
    <property type="match status" value="1"/>
</dbReference>
<dbReference type="HAMAP" id="MF_01227">
    <property type="entry name" value="PyrG"/>
    <property type="match status" value="1"/>
</dbReference>
<dbReference type="InterPro" id="IPR029062">
    <property type="entry name" value="Class_I_gatase-like"/>
</dbReference>
<dbReference type="InterPro" id="IPR004468">
    <property type="entry name" value="CTP_synthase"/>
</dbReference>
<dbReference type="InterPro" id="IPR017456">
    <property type="entry name" value="CTP_synthase_N"/>
</dbReference>
<dbReference type="InterPro" id="IPR017926">
    <property type="entry name" value="GATASE"/>
</dbReference>
<dbReference type="InterPro" id="IPR033828">
    <property type="entry name" value="GATase1_CTP_Synthase"/>
</dbReference>
<dbReference type="InterPro" id="IPR027417">
    <property type="entry name" value="P-loop_NTPase"/>
</dbReference>
<dbReference type="NCBIfam" id="NF003792">
    <property type="entry name" value="PRK05380.1"/>
    <property type="match status" value="1"/>
</dbReference>
<dbReference type="NCBIfam" id="TIGR00337">
    <property type="entry name" value="PyrG"/>
    <property type="match status" value="1"/>
</dbReference>
<dbReference type="PANTHER" id="PTHR11550">
    <property type="entry name" value="CTP SYNTHASE"/>
    <property type="match status" value="1"/>
</dbReference>
<dbReference type="PANTHER" id="PTHR11550:SF0">
    <property type="entry name" value="CTP SYNTHASE-RELATED"/>
    <property type="match status" value="1"/>
</dbReference>
<dbReference type="Pfam" id="PF06418">
    <property type="entry name" value="CTP_synth_N"/>
    <property type="match status" value="1"/>
</dbReference>
<dbReference type="Pfam" id="PF00117">
    <property type="entry name" value="GATase"/>
    <property type="match status" value="1"/>
</dbReference>
<dbReference type="SUPFAM" id="SSF52317">
    <property type="entry name" value="Class I glutamine amidotransferase-like"/>
    <property type="match status" value="1"/>
</dbReference>
<dbReference type="SUPFAM" id="SSF52540">
    <property type="entry name" value="P-loop containing nucleoside triphosphate hydrolases"/>
    <property type="match status" value="1"/>
</dbReference>
<dbReference type="PROSITE" id="PS51273">
    <property type="entry name" value="GATASE_TYPE_1"/>
    <property type="match status" value="1"/>
</dbReference>
<accession>A7X4X7</accession>
<organism>
    <name type="scientific">Staphylococcus aureus (strain Mu3 / ATCC 700698)</name>
    <dbReference type="NCBI Taxonomy" id="418127"/>
    <lineage>
        <taxon>Bacteria</taxon>
        <taxon>Bacillati</taxon>
        <taxon>Bacillota</taxon>
        <taxon>Bacilli</taxon>
        <taxon>Bacillales</taxon>
        <taxon>Staphylococcaceae</taxon>
        <taxon>Staphylococcus</taxon>
    </lineage>
</organism>
<feature type="chain" id="PRO_1000139583" description="CTP synthase">
    <location>
        <begin position="1"/>
        <end position="536"/>
    </location>
</feature>
<feature type="domain" description="Glutamine amidotransferase type-1" evidence="1">
    <location>
        <begin position="293"/>
        <end position="535"/>
    </location>
</feature>
<feature type="region of interest" description="Amidoligase domain" evidence="1">
    <location>
        <begin position="1"/>
        <end position="267"/>
    </location>
</feature>
<feature type="active site" description="Nucleophile; for glutamine hydrolysis" evidence="1">
    <location>
        <position position="382"/>
    </location>
</feature>
<feature type="active site" evidence="1">
    <location>
        <position position="508"/>
    </location>
</feature>
<feature type="active site" evidence="1">
    <location>
        <position position="510"/>
    </location>
</feature>
<feature type="binding site" evidence="1">
    <location>
        <position position="13"/>
    </location>
    <ligand>
        <name>CTP</name>
        <dbReference type="ChEBI" id="CHEBI:37563"/>
        <note>allosteric inhibitor</note>
    </ligand>
</feature>
<feature type="binding site" evidence="1">
    <location>
        <position position="13"/>
    </location>
    <ligand>
        <name>UTP</name>
        <dbReference type="ChEBI" id="CHEBI:46398"/>
    </ligand>
</feature>
<feature type="binding site" evidence="1">
    <location>
        <begin position="14"/>
        <end position="19"/>
    </location>
    <ligand>
        <name>ATP</name>
        <dbReference type="ChEBI" id="CHEBI:30616"/>
    </ligand>
</feature>
<feature type="binding site" evidence="1">
    <location>
        <position position="54"/>
    </location>
    <ligand>
        <name>L-glutamine</name>
        <dbReference type="ChEBI" id="CHEBI:58359"/>
    </ligand>
</feature>
<feature type="binding site" evidence="1">
    <location>
        <position position="71"/>
    </location>
    <ligand>
        <name>ATP</name>
        <dbReference type="ChEBI" id="CHEBI:30616"/>
    </ligand>
</feature>
<feature type="binding site" evidence="1">
    <location>
        <position position="71"/>
    </location>
    <ligand>
        <name>Mg(2+)</name>
        <dbReference type="ChEBI" id="CHEBI:18420"/>
    </ligand>
</feature>
<feature type="binding site" evidence="1">
    <location>
        <position position="141"/>
    </location>
    <ligand>
        <name>Mg(2+)</name>
        <dbReference type="ChEBI" id="CHEBI:18420"/>
    </ligand>
</feature>
<feature type="binding site" evidence="1">
    <location>
        <begin position="148"/>
        <end position="150"/>
    </location>
    <ligand>
        <name>CTP</name>
        <dbReference type="ChEBI" id="CHEBI:37563"/>
        <note>allosteric inhibitor</note>
    </ligand>
</feature>
<feature type="binding site" evidence="1">
    <location>
        <begin position="188"/>
        <end position="193"/>
    </location>
    <ligand>
        <name>CTP</name>
        <dbReference type="ChEBI" id="CHEBI:37563"/>
        <note>allosteric inhibitor</note>
    </ligand>
</feature>
<feature type="binding site" evidence="1">
    <location>
        <begin position="188"/>
        <end position="193"/>
    </location>
    <ligand>
        <name>UTP</name>
        <dbReference type="ChEBI" id="CHEBI:46398"/>
    </ligand>
</feature>
<feature type="binding site" evidence="1">
    <location>
        <position position="224"/>
    </location>
    <ligand>
        <name>CTP</name>
        <dbReference type="ChEBI" id="CHEBI:37563"/>
        <note>allosteric inhibitor</note>
    </ligand>
</feature>
<feature type="binding site" evidence="1">
    <location>
        <position position="224"/>
    </location>
    <ligand>
        <name>UTP</name>
        <dbReference type="ChEBI" id="CHEBI:46398"/>
    </ligand>
</feature>
<feature type="binding site" evidence="1">
    <location>
        <begin position="240"/>
        <end position="242"/>
    </location>
    <ligand>
        <name>ATP</name>
        <dbReference type="ChEBI" id="CHEBI:30616"/>
    </ligand>
</feature>
<feature type="binding site" evidence="1">
    <location>
        <position position="355"/>
    </location>
    <ligand>
        <name>L-glutamine</name>
        <dbReference type="ChEBI" id="CHEBI:58359"/>
    </ligand>
</feature>
<feature type="binding site" evidence="1">
    <location>
        <begin position="383"/>
        <end position="386"/>
    </location>
    <ligand>
        <name>L-glutamine</name>
        <dbReference type="ChEBI" id="CHEBI:58359"/>
    </ligand>
</feature>
<feature type="binding site" evidence="1">
    <location>
        <position position="406"/>
    </location>
    <ligand>
        <name>L-glutamine</name>
        <dbReference type="ChEBI" id="CHEBI:58359"/>
    </ligand>
</feature>
<feature type="binding site" evidence="1">
    <location>
        <position position="463"/>
    </location>
    <ligand>
        <name>L-glutamine</name>
        <dbReference type="ChEBI" id="CHEBI:58359"/>
    </ligand>
</feature>
<evidence type="ECO:0000255" key="1">
    <source>
        <dbReference type="HAMAP-Rule" id="MF_01227"/>
    </source>
</evidence>
<protein>
    <recommendedName>
        <fullName evidence="1">CTP synthase</fullName>
        <ecNumber evidence="1">6.3.4.2</ecNumber>
    </recommendedName>
    <alternativeName>
        <fullName evidence="1">Cytidine 5'-triphosphate synthase</fullName>
    </alternativeName>
    <alternativeName>
        <fullName evidence="1">Cytidine triphosphate synthetase</fullName>
        <shortName evidence="1">CTP synthetase</shortName>
        <shortName evidence="1">CTPS</shortName>
    </alternativeName>
    <alternativeName>
        <fullName evidence="1">UTP--ammonia ligase</fullName>
    </alternativeName>
</protein>
<proteinExistence type="inferred from homology"/>
<keyword id="KW-0067">ATP-binding</keyword>
<keyword id="KW-0315">Glutamine amidotransferase</keyword>
<keyword id="KW-0436">Ligase</keyword>
<keyword id="KW-0460">Magnesium</keyword>
<keyword id="KW-0479">Metal-binding</keyword>
<keyword id="KW-0547">Nucleotide-binding</keyword>
<keyword id="KW-0665">Pyrimidine biosynthesis</keyword>
<gene>
    <name evidence="1" type="primary">pyrG</name>
    <name type="ordered locus">SAHV_2111</name>
</gene>
<comment type="function">
    <text evidence="1">Catalyzes the ATP-dependent amination of UTP to CTP with either L-glutamine or ammonia as the source of nitrogen. Regulates intracellular CTP levels through interactions with the four ribonucleotide triphosphates.</text>
</comment>
<comment type="catalytic activity">
    <reaction evidence="1">
        <text>UTP + L-glutamine + ATP + H2O = CTP + L-glutamate + ADP + phosphate + 2 H(+)</text>
        <dbReference type="Rhea" id="RHEA:26426"/>
        <dbReference type="ChEBI" id="CHEBI:15377"/>
        <dbReference type="ChEBI" id="CHEBI:15378"/>
        <dbReference type="ChEBI" id="CHEBI:29985"/>
        <dbReference type="ChEBI" id="CHEBI:30616"/>
        <dbReference type="ChEBI" id="CHEBI:37563"/>
        <dbReference type="ChEBI" id="CHEBI:43474"/>
        <dbReference type="ChEBI" id="CHEBI:46398"/>
        <dbReference type="ChEBI" id="CHEBI:58359"/>
        <dbReference type="ChEBI" id="CHEBI:456216"/>
        <dbReference type="EC" id="6.3.4.2"/>
    </reaction>
</comment>
<comment type="catalytic activity">
    <reaction evidence="1">
        <text>L-glutamine + H2O = L-glutamate + NH4(+)</text>
        <dbReference type="Rhea" id="RHEA:15889"/>
        <dbReference type="ChEBI" id="CHEBI:15377"/>
        <dbReference type="ChEBI" id="CHEBI:28938"/>
        <dbReference type="ChEBI" id="CHEBI:29985"/>
        <dbReference type="ChEBI" id="CHEBI:58359"/>
    </reaction>
</comment>
<comment type="catalytic activity">
    <reaction evidence="1">
        <text>UTP + NH4(+) + ATP = CTP + ADP + phosphate + 2 H(+)</text>
        <dbReference type="Rhea" id="RHEA:16597"/>
        <dbReference type="ChEBI" id="CHEBI:15378"/>
        <dbReference type="ChEBI" id="CHEBI:28938"/>
        <dbReference type="ChEBI" id="CHEBI:30616"/>
        <dbReference type="ChEBI" id="CHEBI:37563"/>
        <dbReference type="ChEBI" id="CHEBI:43474"/>
        <dbReference type="ChEBI" id="CHEBI:46398"/>
        <dbReference type="ChEBI" id="CHEBI:456216"/>
    </reaction>
</comment>
<comment type="activity regulation">
    <text evidence="1">Allosterically activated by GTP, when glutamine is the substrate; GTP has no effect on the reaction when ammonia is the substrate. The allosteric effector GTP functions by stabilizing the protein conformation that binds the tetrahedral intermediate(s) formed during glutamine hydrolysis. Inhibited by the product CTP, via allosteric rather than competitive inhibition.</text>
</comment>
<comment type="pathway">
    <text evidence="1">Pyrimidine metabolism; CTP biosynthesis via de novo pathway; CTP from UDP: step 2/2.</text>
</comment>
<comment type="subunit">
    <text evidence="1">Homotetramer.</text>
</comment>
<comment type="miscellaneous">
    <text evidence="1">CTPSs have evolved a hybrid strategy for distinguishing between UTP and CTP. The overlapping regions of the product feedback inhibitory and substrate sites recognize a common feature in both compounds, the triphosphate moiety. To differentiate isosteric substrate and product pyrimidine rings, an additional pocket far from the expected kinase/ligase catalytic site, specifically recognizes the cytosine and ribose portions of the product inhibitor.</text>
</comment>
<comment type="similarity">
    <text evidence="1">Belongs to the CTP synthase family.</text>
</comment>
<reference key="1">
    <citation type="journal article" date="2008" name="Antimicrob. Agents Chemother.">
        <title>Mutated response regulator graR is responsible for phenotypic conversion of Staphylococcus aureus from heterogeneous vancomycin-intermediate resistance to vancomycin-intermediate resistance.</title>
        <authorList>
            <person name="Neoh H.-M."/>
            <person name="Cui L."/>
            <person name="Yuzawa H."/>
            <person name="Takeuchi F."/>
            <person name="Matsuo M."/>
            <person name="Hiramatsu K."/>
        </authorList>
    </citation>
    <scope>NUCLEOTIDE SEQUENCE [LARGE SCALE GENOMIC DNA]</scope>
    <source>
        <strain>Mu3 / ATCC 700698</strain>
    </source>
</reference>
<sequence length="536" mass="59992">MTKFIFVTGGVVSSLGKGITASSLGRLLKDRGLNVTIQKFDPYLNVDPGTMSPYQHGEVFVTDDGAETDLDLGHYERFIDINLNKFSNVTAGKVYSHVLKKERRGDYLGGTVQVIPHITNEIKERLLLAGESTNADVVITEIGGTTGDIESLPFIEAIRQIRSDLGRENVMYVHCTLLPYIKAAGEMKTKPTQHSVKELRGLGIQPDLIVVRTEYEMTQDLKDKIALFCDINKESVIECRDADSLYEIPLQLSQQNMDDIVIKRLQLNAKYETQLDEWKQLLDIVNNLDGKITIGLVGKYVSLQDAYLSVVESLKHAGYPFAKDIDIRWIDSSEVTDENAAEYLADVDGILVPGGFGFRASEGKISAIKYARENNVPFFGICLGMQLATVEFSRNVLGLEGAHSAELDPATPYPIIDLLPEQKDIEDLGGTLRLGLYPCSIKEGTLAQDVYGKAEIEERHRHRYEFNNDYREQLEANGMVISGTSPDGRLVEMVEIPTNDFFIACQFHPEFLSRPNRPHPIFKSFIEASLKYQQNK</sequence>